<dbReference type="EC" id="1.14.19.20" evidence="1"/>
<dbReference type="EMBL" id="AB016248">
    <property type="protein sequence ID" value="BAA33730.1"/>
    <property type="molecule type" value="mRNA"/>
</dbReference>
<dbReference type="EMBL" id="AK043825">
    <property type="protein sequence ID" value="BAC31666.1"/>
    <property type="molecule type" value="mRNA"/>
</dbReference>
<dbReference type="EMBL" id="AK077670">
    <property type="protein sequence ID" value="BAC36944.1"/>
    <property type="molecule type" value="mRNA"/>
</dbReference>
<dbReference type="EMBL" id="AC160051">
    <property type="status" value="NOT_ANNOTATED_CDS"/>
    <property type="molecule type" value="Genomic_DNA"/>
</dbReference>
<dbReference type="CCDS" id="CCDS23086.1"/>
<dbReference type="RefSeq" id="NP_766357.1">
    <property type="nucleotide sequence ID" value="NM_172769.2"/>
</dbReference>
<dbReference type="RefSeq" id="XP_006510316.1">
    <property type="nucleotide sequence ID" value="XM_006510253.3"/>
</dbReference>
<dbReference type="BioGRID" id="231634">
    <property type="interactions" value="5"/>
</dbReference>
<dbReference type="FunCoup" id="O88822">
    <property type="interactions" value="854"/>
</dbReference>
<dbReference type="STRING" id="10090.ENSMUSP00000057354"/>
<dbReference type="iPTMnet" id="O88822"/>
<dbReference type="PhosphoSitePlus" id="O88822"/>
<dbReference type="PaxDb" id="10090-ENSMUSP00000057354"/>
<dbReference type="PeptideAtlas" id="O88822"/>
<dbReference type="ProteomicsDB" id="253403"/>
<dbReference type="Pumba" id="O88822"/>
<dbReference type="Antibodypedia" id="45921">
    <property type="antibodies" value="29 antibodies from 13 providers"/>
</dbReference>
<dbReference type="DNASU" id="235293"/>
<dbReference type="Ensembl" id="ENSMUST00000052725.15">
    <property type="protein sequence ID" value="ENSMUSP00000057354.8"/>
    <property type="gene ID" value="ENSMUSG00000032018.15"/>
</dbReference>
<dbReference type="Ensembl" id="ENSMUST00000169609.2">
    <property type="protein sequence ID" value="ENSMUSP00000130438.2"/>
    <property type="gene ID" value="ENSMUSG00000032018.15"/>
</dbReference>
<dbReference type="GeneID" id="235293"/>
<dbReference type="KEGG" id="mmu:235293"/>
<dbReference type="UCSC" id="uc009par.1">
    <property type="organism name" value="mouse"/>
</dbReference>
<dbReference type="AGR" id="MGI:1353611"/>
<dbReference type="CTD" id="6309"/>
<dbReference type="MGI" id="MGI:1353611">
    <property type="gene designation" value="Sc5d"/>
</dbReference>
<dbReference type="VEuPathDB" id="HostDB:ENSMUSG00000032018"/>
<dbReference type="eggNOG" id="KOG0872">
    <property type="taxonomic scope" value="Eukaryota"/>
</dbReference>
<dbReference type="GeneTree" id="ENSGT00550000075101"/>
<dbReference type="HOGENOM" id="CLU_047036_2_2_1"/>
<dbReference type="InParanoid" id="O88822"/>
<dbReference type="OMA" id="FVFICPM"/>
<dbReference type="OrthoDB" id="408954at2759"/>
<dbReference type="PhylomeDB" id="O88822"/>
<dbReference type="TreeFam" id="TF300797"/>
<dbReference type="BRENDA" id="1.14.19.20">
    <property type="organism ID" value="3474"/>
</dbReference>
<dbReference type="Reactome" id="R-MMU-6807047">
    <property type="pathway name" value="Cholesterol biosynthesis via desmosterol"/>
</dbReference>
<dbReference type="Reactome" id="R-MMU-6807062">
    <property type="pathway name" value="Cholesterol biosynthesis via lathosterol"/>
</dbReference>
<dbReference type="UniPathway" id="UPA00063"/>
<dbReference type="BioGRID-ORCS" id="235293">
    <property type="hits" value="3 hits in 78 CRISPR screens"/>
</dbReference>
<dbReference type="ChiTaRS" id="Sc5d">
    <property type="organism name" value="mouse"/>
</dbReference>
<dbReference type="PRO" id="PR:O88822"/>
<dbReference type="Proteomes" id="UP000000589">
    <property type="component" value="Chromosome 9"/>
</dbReference>
<dbReference type="RNAct" id="O88822">
    <property type="molecule type" value="protein"/>
</dbReference>
<dbReference type="Bgee" id="ENSMUSG00000032018">
    <property type="expression patterns" value="Expressed in left lobe of liver and 262 other cell types or tissues"/>
</dbReference>
<dbReference type="ExpressionAtlas" id="O88822">
    <property type="expression patterns" value="baseline and differential"/>
</dbReference>
<dbReference type="GO" id="GO:0005789">
    <property type="term" value="C:endoplasmic reticulum membrane"/>
    <property type="evidence" value="ECO:0000250"/>
    <property type="project" value="UniProtKB"/>
</dbReference>
<dbReference type="GO" id="GO:0000248">
    <property type="term" value="F:C-5 sterol desaturase activity"/>
    <property type="evidence" value="ECO:0007669"/>
    <property type="project" value="Ensembl"/>
</dbReference>
<dbReference type="GO" id="GO:0050046">
    <property type="term" value="F:delta7-sterol 5(6)-desaturase activity"/>
    <property type="evidence" value="ECO:0000250"/>
    <property type="project" value="UniProtKB"/>
</dbReference>
<dbReference type="GO" id="GO:0005506">
    <property type="term" value="F:iron ion binding"/>
    <property type="evidence" value="ECO:0007669"/>
    <property type="project" value="InterPro"/>
</dbReference>
<dbReference type="GO" id="GO:0033490">
    <property type="term" value="P:cholesterol biosynthetic process via lathosterol"/>
    <property type="evidence" value="ECO:0000250"/>
    <property type="project" value="UniProtKB"/>
</dbReference>
<dbReference type="GO" id="GO:0110076">
    <property type="term" value="P:negative regulation of ferroptosis"/>
    <property type="evidence" value="ECO:0000250"/>
    <property type="project" value="UniProtKB"/>
</dbReference>
<dbReference type="InterPro" id="IPR006694">
    <property type="entry name" value="Fatty_acid_hydroxylase"/>
</dbReference>
<dbReference type="InterPro" id="IPR050307">
    <property type="entry name" value="Sterol_Desaturase_Related"/>
</dbReference>
<dbReference type="PANTHER" id="PTHR11863">
    <property type="entry name" value="STEROL DESATURASE"/>
    <property type="match status" value="1"/>
</dbReference>
<dbReference type="Pfam" id="PF04116">
    <property type="entry name" value="FA_hydroxylase"/>
    <property type="match status" value="1"/>
</dbReference>
<gene>
    <name evidence="8" type="primary">Sc5d</name>
    <name type="synonym">Sc5dl</name>
</gene>
<evidence type="ECO:0000250" key="1">
    <source>
        <dbReference type="UniProtKB" id="O75845"/>
    </source>
</evidence>
<evidence type="ECO:0000250" key="2">
    <source>
        <dbReference type="UniProtKB" id="P53045"/>
    </source>
</evidence>
<evidence type="ECO:0000250" key="3">
    <source>
        <dbReference type="UniProtKB" id="Q9EQS5"/>
    </source>
</evidence>
<evidence type="ECO:0000255" key="4"/>
<evidence type="ECO:0000256" key="5">
    <source>
        <dbReference type="SAM" id="MobiDB-lite"/>
    </source>
</evidence>
<evidence type="ECO:0000303" key="6">
    <source>
    </source>
</evidence>
<evidence type="ECO:0000305" key="7"/>
<evidence type="ECO:0000312" key="8">
    <source>
        <dbReference type="MGI" id="MGI:1353611"/>
    </source>
</evidence>
<comment type="function">
    <text evidence="1">Catalyzes the penultimate step of the biosynthesis of cholesterol, the dehydrogenation of lathosterol into 7-dehydrocholesterol (7-DHC). Cholesterol is the major sterol component in mammalian membranes and a precursor for bile acid and steroid hormone synthesis. In addition to its essential role in cholesterol biosynthesis, it also indirectly regulates ferroptosis through the production of 7-DHC. By diverting the spread of damage caused by peroxyl radicals from the phospholipid components to its sterol nucleus, 7-DHC prevents this form of cell death.</text>
</comment>
<comment type="catalytic activity">
    <reaction evidence="3">
        <text>a Delta(7)-sterol + 2 Fe(II)-[cytochrome b5] + O2 + 2 H(+) = a Delta(5),Delta(7)-sterol + 2 Fe(III)-[cytochrome b5] + 2 H2O</text>
        <dbReference type="Rhea" id="RHEA:54320"/>
        <dbReference type="Rhea" id="RHEA-COMP:10438"/>
        <dbReference type="Rhea" id="RHEA-COMP:10439"/>
        <dbReference type="ChEBI" id="CHEBI:15377"/>
        <dbReference type="ChEBI" id="CHEBI:15378"/>
        <dbReference type="ChEBI" id="CHEBI:15379"/>
        <dbReference type="ChEBI" id="CHEBI:29033"/>
        <dbReference type="ChEBI" id="CHEBI:29034"/>
        <dbReference type="ChEBI" id="CHEBI:138130"/>
        <dbReference type="ChEBI" id="CHEBI:138131"/>
        <dbReference type="EC" id="1.14.19.20"/>
    </reaction>
    <physiologicalReaction direction="left-to-right" evidence="3">
        <dbReference type="Rhea" id="RHEA:54321"/>
    </physiologicalReaction>
</comment>
<comment type="catalytic activity">
    <reaction evidence="1">
        <text>lathosterol + 2 Fe(II)-[cytochrome b5] + O2 + 2 H(+) = 7-dehydrocholesterol + 2 Fe(III)-[cytochrome b5] + 2 H2O</text>
        <dbReference type="Rhea" id="RHEA:46556"/>
        <dbReference type="Rhea" id="RHEA-COMP:10438"/>
        <dbReference type="Rhea" id="RHEA-COMP:10439"/>
        <dbReference type="ChEBI" id="CHEBI:15377"/>
        <dbReference type="ChEBI" id="CHEBI:15378"/>
        <dbReference type="ChEBI" id="CHEBI:15379"/>
        <dbReference type="ChEBI" id="CHEBI:17168"/>
        <dbReference type="ChEBI" id="CHEBI:17759"/>
        <dbReference type="ChEBI" id="CHEBI:29033"/>
        <dbReference type="ChEBI" id="CHEBI:29034"/>
        <dbReference type="EC" id="1.14.19.20"/>
    </reaction>
    <physiologicalReaction direction="left-to-right" evidence="1">
        <dbReference type="Rhea" id="RHEA:46557"/>
    </physiologicalReaction>
</comment>
<comment type="catalytic activity">
    <reaction evidence="1">
        <text>5alpha-cholesta-7,24-dien-3beta-ol + 2 Fe(II)-[cytochrome b5] + O2 + 2 H(+) = 7-dehydrodesmosterol + 2 Fe(III)-[cytochrome b5] + 2 H2O</text>
        <dbReference type="Rhea" id="RHEA:47184"/>
        <dbReference type="Rhea" id="RHEA-COMP:10438"/>
        <dbReference type="Rhea" id="RHEA-COMP:10439"/>
        <dbReference type="ChEBI" id="CHEBI:15377"/>
        <dbReference type="ChEBI" id="CHEBI:15378"/>
        <dbReference type="ChEBI" id="CHEBI:15379"/>
        <dbReference type="ChEBI" id="CHEBI:16290"/>
        <dbReference type="ChEBI" id="CHEBI:27910"/>
        <dbReference type="ChEBI" id="CHEBI:29033"/>
        <dbReference type="ChEBI" id="CHEBI:29034"/>
    </reaction>
    <physiologicalReaction direction="left-to-right" evidence="1">
        <dbReference type="Rhea" id="RHEA:47185"/>
    </physiologicalReaction>
</comment>
<comment type="cofactor">
    <cofactor evidence="2">
        <name>Fe cation</name>
        <dbReference type="ChEBI" id="CHEBI:24875"/>
    </cofactor>
</comment>
<comment type="pathway">
    <text evidence="1">Steroid biosynthesis; cholesterol biosynthesis.</text>
</comment>
<comment type="subcellular location">
    <subcellularLocation>
        <location evidence="3">Endoplasmic reticulum membrane</location>
        <topology evidence="4">Multi-pass membrane protein</topology>
    </subcellularLocation>
</comment>
<comment type="domain">
    <text>The histidine box domains may contain the active site and/or be involved in metal ion binding.</text>
</comment>
<comment type="similarity">
    <text evidence="7">Belongs to the sterol desaturase family.</text>
</comment>
<feature type="chain" id="PRO_0000117029" description="Lathosterol oxidase">
    <location>
        <begin position="1"/>
        <end position="299"/>
    </location>
</feature>
<feature type="transmembrane region" description="Helical" evidence="4">
    <location>
        <begin position="32"/>
        <end position="52"/>
    </location>
</feature>
<feature type="transmembrane region" description="Helical" evidence="4">
    <location>
        <begin position="79"/>
        <end position="99"/>
    </location>
</feature>
<feature type="transmembrane region" description="Helical" evidence="4">
    <location>
        <begin position="117"/>
        <end position="137"/>
    </location>
</feature>
<feature type="transmembrane region" description="Helical" evidence="4">
    <location>
        <begin position="186"/>
        <end position="206"/>
    </location>
</feature>
<feature type="domain" description="Fatty acid hydroxylase" evidence="4">
    <location>
        <begin position="124"/>
        <end position="252"/>
    </location>
</feature>
<feature type="region of interest" description="Disordered" evidence="5">
    <location>
        <begin position="280"/>
        <end position="299"/>
    </location>
</feature>
<feature type="short sequence motif" description="Histidine box-1">
    <location>
        <begin position="138"/>
        <end position="143"/>
    </location>
</feature>
<feature type="short sequence motif" description="Histidine box-2">
    <location>
        <begin position="151"/>
        <end position="155"/>
    </location>
</feature>
<feature type="short sequence motif" description="Histidine box-3">
    <location>
        <begin position="228"/>
        <end position="233"/>
    </location>
</feature>
<feature type="modified residue" description="Phosphoserine" evidence="1">
    <location>
        <position position="253"/>
    </location>
</feature>
<feature type="sequence conflict" description="In Ref. 1; BAA33730." evidence="7" ref="1">
    <original>W</original>
    <variation>R</variation>
    <location>
        <position position="136"/>
    </location>
</feature>
<feature type="sequence conflict" description="In Ref. 1; BAA33730." evidence="7" ref="1">
    <original>G</original>
    <variation>S</variation>
    <location>
        <position position="291"/>
    </location>
</feature>
<reference key="1">
    <citation type="journal article" date="2000" name="Biochim. Biophys. Acta">
        <title>cDNA cloning of the mammalian sterol C5-desaturase and the expression in yeast mutant.</title>
        <authorList>
            <person name="Nishi S."/>
            <person name="Nishino H."/>
            <person name="Ishibashi T."/>
        </authorList>
    </citation>
    <scope>NUCLEOTIDE SEQUENCE [MRNA]</scope>
    <source>
        <strain>BALB/cJ</strain>
    </source>
</reference>
<reference key="2">
    <citation type="journal article" date="2005" name="Science">
        <title>The transcriptional landscape of the mammalian genome.</title>
        <authorList>
            <person name="Carninci P."/>
            <person name="Kasukawa T."/>
            <person name="Katayama S."/>
            <person name="Gough J."/>
            <person name="Frith M.C."/>
            <person name="Maeda N."/>
            <person name="Oyama R."/>
            <person name="Ravasi T."/>
            <person name="Lenhard B."/>
            <person name="Wells C."/>
            <person name="Kodzius R."/>
            <person name="Shimokawa K."/>
            <person name="Bajic V.B."/>
            <person name="Brenner S.E."/>
            <person name="Batalov S."/>
            <person name="Forrest A.R."/>
            <person name="Zavolan M."/>
            <person name="Davis M.J."/>
            <person name="Wilming L.G."/>
            <person name="Aidinis V."/>
            <person name="Allen J.E."/>
            <person name="Ambesi-Impiombato A."/>
            <person name="Apweiler R."/>
            <person name="Aturaliya R.N."/>
            <person name="Bailey T.L."/>
            <person name="Bansal M."/>
            <person name="Baxter L."/>
            <person name="Beisel K.W."/>
            <person name="Bersano T."/>
            <person name="Bono H."/>
            <person name="Chalk A.M."/>
            <person name="Chiu K.P."/>
            <person name="Choudhary V."/>
            <person name="Christoffels A."/>
            <person name="Clutterbuck D.R."/>
            <person name="Crowe M.L."/>
            <person name="Dalla E."/>
            <person name="Dalrymple B.P."/>
            <person name="de Bono B."/>
            <person name="Della Gatta G."/>
            <person name="di Bernardo D."/>
            <person name="Down T."/>
            <person name="Engstrom P."/>
            <person name="Fagiolini M."/>
            <person name="Faulkner G."/>
            <person name="Fletcher C.F."/>
            <person name="Fukushima T."/>
            <person name="Furuno M."/>
            <person name="Futaki S."/>
            <person name="Gariboldi M."/>
            <person name="Georgii-Hemming P."/>
            <person name="Gingeras T.R."/>
            <person name="Gojobori T."/>
            <person name="Green R.E."/>
            <person name="Gustincich S."/>
            <person name="Harbers M."/>
            <person name="Hayashi Y."/>
            <person name="Hensch T.K."/>
            <person name="Hirokawa N."/>
            <person name="Hill D."/>
            <person name="Huminiecki L."/>
            <person name="Iacono M."/>
            <person name="Ikeo K."/>
            <person name="Iwama A."/>
            <person name="Ishikawa T."/>
            <person name="Jakt M."/>
            <person name="Kanapin A."/>
            <person name="Katoh M."/>
            <person name="Kawasawa Y."/>
            <person name="Kelso J."/>
            <person name="Kitamura H."/>
            <person name="Kitano H."/>
            <person name="Kollias G."/>
            <person name="Krishnan S.P."/>
            <person name="Kruger A."/>
            <person name="Kummerfeld S.K."/>
            <person name="Kurochkin I.V."/>
            <person name="Lareau L.F."/>
            <person name="Lazarevic D."/>
            <person name="Lipovich L."/>
            <person name="Liu J."/>
            <person name="Liuni S."/>
            <person name="McWilliam S."/>
            <person name="Madan Babu M."/>
            <person name="Madera M."/>
            <person name="Marchionni L."/>
            <person name="Matsuda H."/>
            <person name="Matsuzawa S."/>
            <person name="Miki H."/>
            <person name="Mignone F."/>
            <person name="Miyake S."/>
            <person name="Morris K."/>
            <person name="Mottagui-Tabar S."/>
            <person name="Mulder N."/>
            <person name="Nakano N."/>
            <person name="Nakauchi H."/>
            <person name="Ng P."/>
            <person name="Nilsson R."/>
            <person name="Nishiguchi S."/>
            <person name="Nishikawa S."/>
            <person name="Nori F."/>
            <person name="Ohara O."/>
            <person name="Okazaki Y."/>
            <person name="Orlando V."/>
            <person name="Pang K.C."/>
            <person name="Pavan W.J."/>
            <person name="Pavesi G."/>
            <person name="Pesole G."/>
            <person name="Petrovsky N."/>
            <person name="Piazza S."/>
            <person name="Reed J."/>
            <person name="Reid J.F."/>
            <person name="Ring B.Z."/>
            <person name="Ringwald M."/>
            <person name="Rost B."/>
            <person name="Ruan Y."/>
            <person name="Salzberg S.L."/>
            <person name="Sandelin A."/>
            <person name="Schneider C."/>
            <person name="Schoenbach C."/>
            <person name="Sekiguchi K."/>
            <person name="Semple C.A."/>
            <person name="Seno S."/>
            <person name="Sessa L."/>
            <person name="Sheng Y."/>
            <person name="Shibata Y."/>
            <person name="Shimada H."/>
            <person name="Shimada K."/>
            <person name="Silva D."/>
            <person name="Sinclair B."/>
            <person name="Sperling S."/>
            <person name="Stupka E."/>
            <person name="Sugiura K."/>
            <person name="Sultana R."/>
            <person name="Takenaka Y."/>
            <person name="Taki K."/>
            <person name="Tammoja K."/>
            <person name="Tan S.L."/>
            <person name="Tang S."/>
            <person name="Taylor M.S."/>
            <person name="Tegner J."/>
            <person name="Teichmann S.A."/>
            <person name="Ueda H.R."/>
            <person name="van Nimwegen E."/>
            <person name="Verardo R."/>
            <person name="Wei C.L."/>
            <person name="Yagi K."/>
            <person name="Yamanishi H."/>
            <person name="Zabarovsky E."/>
            <person name="Zhu S."/>
            <person name="Zimmer A."/>
            <person name="Hide W."/>
            <person name="Bult C."/>
            <person name="Grimmond S.M."/>
            <person name="Teasdale R.D."/>
            <person name="Liu E.T."/>
            <person name="Brusic V."/>
            <person name="Quackenbush J."/>
            <person name="Wahlestedt C."/>
            <person name="Mattick J.S."/>
            <person name="Hume D.A."/>
            <person name="Kai C."/>
            <person name="Sasaki D."/>
            <person name="Tomaru Y."/>
            <person name="Fukuda S."/>
            <person name="Kanamori-Katayama M."/>
            <person name="Suzuki M."/>
            <person name="Aoki J."/>
            <person name="Arakawa T."/>
            <person name="Iida J."/>
            <person name="Imamura K."/>
            <person name="Itoh M."/>
            <person name="Kato T."/>
            <person name="Kawaji H."/>
            <person name="Kawagashira N."/>
            <person name="Kawashima T."/>
            <person name="Kojima M."/>
            <person name="Kondo S."/>
            <person name="Konno H."/>
            <person name="Nakano K."/>
            <person name="Ninomiya N."/>
            <person name="Nishio T."/>
            <person name="Okada M."/>
            <person name="Plessy C."/>
            <person name="Shibata K."/>
            <person name="Shiraki T."/>
            <person name="Suzuki S."/>
            <person name="Tagami M."/>
            <person name="Waki K."/>
            <person name="Watahiki A."/>
            <person name="Okamura-Oho Y."/>
            <person name="Suzuki H."/>
            <person name="Kawai J."/>
            <person name="Hayashizaki Y."/>
        </authorList>
    </citation>
    <scope>NUCLEOTIDE SEQUENCE [LARGE SCALE MRNA]</scope>
    <source>
        <strain>C57BL/6J</strain>
        <tissue>Brain cortex</tissue>
    </source>
</reference>
<reference key="3">
    <citation type="journal article" date="2009" name="PLoS Biol.">
        <title>Lineage-specific biology revealed by a finished genome assembly of the mouse.</title>
        <authorList>
            <person name="Church D.M."/>
            <person name="Goodstadt L."/>
            <person name="Hillier L.W."/>
            <person name="Zody M.C."/>
            <person name="Goldstein S."/>
            <person name="She X."/>
            <person name="Bult C.J."/>
            <person name="Agarwala R."/>
            <person name="Cherry J.L."/>
            <person name="DiCuccio M."/>
            <person name="Hlavina W."/>
            <person name="Kapustin Y."/>
            <person name="Meric P."/>
            <person name="Maglott D."/>
            <person name="Birtle Z."/>
            <person name="Marques A.C."/>
            <person name="Graves T."/>
            <person name="Zhou S."/>
            <person name="Teague B."/>
            <person name="Potamousis K."/>
            <person name="Churas C."/>
            <person name="Place M."/>
            <person name="Herschleb J."/>
            <person name="Runnheim R."/>
            <person name="Forrest D."/>
            <person name="Amos-Landgraf J."/>
            <person name="Schwartz D.C."/>
            <person name="Cheng Z."/>
            <person name="Lindblad-Toh K."/>
            <person name="Eichler E.E."/>
            <person name="Ponting C.P."/>
        </authorList>
    </citation>
    <scope>NUCLEOTIDE SEQUENCE [LARGE SCALE GENOMIC DNA]</scope>
    <source>
        <strain>C57BL/6J</strain>
    </source>
</reference>
<proteinExistence type="evidence at transcript level"/>
<protein>
    <recommendedName>
        <fullName evidence="1">Lathosterol oxidase</fullName>
        <ecNumber evidence="1">1.14.19.20</ecNumber>
    </recommendedName>
    <alternativeName>
        <fullName>C-5 sterol desaturase</fullName>
    </alternativeName>
    <alternativeName>
        <fullName>Delta(7)-sterol 5-desaturase</fullName>
    </alternativeName>
    <alternativeName>
        <fullName>Delta(7)-sterol C5(6)-desaturase</fullName>
    </alternativeName>
    <alternativeName>
        <fullName>Lathosterol 5-desaturase</fullName>
    </alternativeName>
    <alternativeName>
        <fullName evidence="6">Sterol-C5-desaturase</fullName>
    </alternativeName>
</protein>
<name>SC5D_MOUSE</name>
<accession>O88822</accession>
<accession>Q8BGI0</accession>
<organism>
    <name type="scientific">Mus musculus</name>
    <name type="common">Mouse</name>
    <dbReference type="NCBI Taxonomy" id="10090"/>
    <lineage>
        <taxon>Eukaryota</taxon>
        <taxon>Metazoa</taxon>
        <taxon>Chordata</taxon>
        <taxon>Craniata</taxon>
        <taxon>Vertebrata</taxon>
        <taxon>Euteleostomi</taxon>
        <taxon>Mammalia</taxon>
        <taxon>Eutheria</taxon>
        <taxon>Euarchontoglires</taxon>
        <taxon>Glires</taxon>
        <taxon>Rodentia</taxon>
        <taxon>Myomorpha</taxon>
        <taxon>Muroidea</taxon>
        <taxon>Muridae</taxon>
        <taxon>Murinae</taxon>
        <taxon>Mus</taxon>
        <taxon>Mus</taxon>
    </lineage>
</organism>
<sequence length="299" mass="35062">MDLVLSAADYYFFTPYVYPATWPEDNIIRQTISLLIVTNLGAYILYFFCATLSYYFVYDHSLMKHPQFLKNQVSREIVFTVKSLPWISIPTVSLFLLELRGYSKLYDDIGDFPNGWIHLMVSVVSFLFFTDMLIYWIHRGLHHRLVYKRIHKPHHIWKIPTPFASHAFHPVDGFLQSLPYHIYPFVFPLHKVVYLGLYVLVNVWTISIHDGDFRVPQILRPFINGSAHHTDHHMFFDYNYGQYFTLWDRIGGSFKHPSSFEGKGPHSYVKNMTEKESNSFAENGCKGKKVGNGEFTKNK</sequence>
<keyword id="KW-0256">Endoplasmic reticulum</keyword>
<keyword id="KW-0408">Iron</keyword>
<keyword id="KW-0444">Lipid biosynthesis</keyword>
<keyword id="KW-0443">Lipid metabolism</keyword>
<keyword id="KW-0472">Membrane</keyword>
<keyword id="KW-0560">Oxidoreductase</keyword>
<keyword id="KW-0597">Phosphoprotein</keyword>
<keyword id="KW-1185">Reference proteome</keyword>
<keyword id="KW-0752">Steroid biosynthesis</keyword>
<keyword id="KW-0753">Steroid metabolism</keyword>
<keyword id="KW-0756">Sterol biosynthesis</keyword>
<keyword id="KW-1207">Sterol metabolism</keyword>
<keyword id="KW-0812">Transmembrane</keyword>
<keyword id="KW-1133">Transmembrane helix</keyword>